<sequence>MEANKKAKPSYGDVISNLPNDLLCRILSYLSTKEAALTSILSKRWSNLLLSIPILDFDDSVLLKPQKGQRKNVFFKAFVDRLLSQRVETSSHVQRVSLKCRQGGVEPDCVIKWILTTVRDLGVLDLSLCIDFGIFHLPFNVFRSKTLVKLRIGTMIRLSQFPSDVVSPTLNSLVLDLVEFRDGDKVEFRQILLAFPSLQSLRVHESNKWKFWNGSASSRTLKSLVYRSDDDSSAPKPCVSFDTPSLVYLDYSDMVADKYENLKFDSLVEARLDLHLTAFQIMRKPNNIGIVSGDVTTLFKGIRNVKILCLSPDALEALYYRGEKIPMFNNLITLSLGSDKPHGSPFIFWKLLPSLLNNSLKLETLIIKGLVHYVAEGWEGLSPMTPMSRLCFSWDTVSDSLSSSAMKVLEISGYKGTWQELNQMKRFLGNLSRLEVVRVYHKAMDDKERINVMFDLFLLPKVSSECDIQVMKETA</sequence>
<feature type="chain" id="PRO_0000274952" description="F-box protein At3g59150">
    <location>
        <begin position="1"/>
        <end position="475"/>
    </location>
</feature>
<feature type="domain" description="F-box" evidence="1">
    <location>
        <begin position="12"/>
        <end position="58"/>
    </location>
</feature>
<dbReference type="EMBL" id="AL163527">
    <property type="protein sequence ID" value="CAB86943.1"/>
    <property type="status" value="ALT_SEQ"/>
    <property type="molecule type" value="Genomic_DNA"/>
</dbReference>
<dbReference type="EMBL" id="AL356014">
    <property type="protein sequence ID" value="CAB91585.1"/>
    <property type="molecule type" value="Genomic_DNA"/>
</dbReference>
<dbReference type="EMBL" id="CP002686">
    <property type="protein sequence ID" value="AEE79883.2"/>
    <property type="molecule type" value="Genomic_DNA"/>
</dbReference>
<dbReference type="EMBL" id="AY099781">
    <property type="protein sequence ID" value="AAM20632.1"/>
    <property type="molecule type" value="mRNA"/>
</dbReference>
<dbReference type="EMBL" id="BT006604">
    <property type="protein sequence ID" value="AAP31948.1"/>
    <property type="molecule type" value="mRNA"/>
</dbReference>
<dbReference type="PIR" id="T47797">
    <property type="entry name" value="T47797"/>
</dbReference>
<dbReference type="PIR" id="T48983">
    <property type="entry name" value="T48983"/>
</dbReference>
<dbReference type="RefSeq" id="NP_191474.3">
    <property type="nucleotide sequence ID" value="NM_115777.5"/>
</dbReference>
<dbReference type="BioGRID" id="10399">
    <property type="interactions" value="13"/>
</dbReference>
<dbReference type="FunCoup" id="Q9LX56">
    <property type="interactions" value="136"/>
</dbReference>
<dbReference type="IntAct" id="Q9LX56">
    <property type="interactions" value="8"/>
</dbReference>
<dbReference type="iPTMnet" id="Q9LX56"/>
<dbReference type="PaxDb" id="3702-AT3G59150.1"/>
<dbReference type="ProteomicsDB" id="222534"/>
<dbReference type="EnsemblPlants" id="AT3G59150.1">
    <property type="protein sequence ID" value="AT3G59150.1"/>
    <property type="gene ID" value="AT3G59150"/>
</dbReference>
<dbReference type="GeneID" id="825084"/>
<dbReference type="Gramene" id="AT3G59150.1">
    <property type="protein sequence ID" value="AT3G59150.1"/>
    <property type="gene ID" value="AT3G59150"/>
</dbReference>
<dbReference type="KEGG" id="ath:AT3G59150"/>
<dbReference type="Araport" id="AT3G59150"/>
<dbReference type="TAIR" id="AT3G59150"/>
<dbReference type="HOGENOM" id="CLU_010721_7_1_1"/>
<dbReference type="InParanoid" id="Q9LX56"/>
<dbReference type="OMA" id="HESNKWK"/>
<dbReference type="PhylomeDB" id="Q9LX56"/>
<dbReference type="PRO" id="PR:Q9LX56"/>
<dbReference type="Proteomes" id="UP000006548">
    <property type="component" value="Chromosome 3"/>
</dbReference>
<dbReference type="ExpressionAtlas" id="Q9LX56">
    <property type="expression patterns" value="baseline and differential"/>
</dbReference>
<dbReference type="CDD" id="cd22160">
    <property type="entry name" value="F-box_AtFBL13-like"/>
    <property type="match status" value="1"/>
</dbReference>
<dbReference type="Gene3D" id="1.20.1280.50">
    <property type="match status" value="1"/>
</dbReference>
<dbReference type="InterPro" id="IPR036047">
    <property type="entry name" value="F-box-like_dom_sf"/>
</dbReference>
<dbReference type="InterPro" id="IPR053781">
    <property type="entry name" value="F-box_AtFBL13-like"/>
</dbReference>
<dbReference type="InterPro" id="IPR001810">
    <property type="entry name" value="F-box_dom"/>
</dbReference>
<dbReference type="InterPro" id="IPR006566">
    <property type="entry name" value="FBD"/>
</dbReference>
<dbReference type="InterPro" id="IPR055294">
    <property type="entry name" value="FBL60-like"/>
</dbReference>
<dbReference type="PANTHER" id="PTHR31293">
    <property type="entry name" value="RNI-LIKE SUPERFAMILY PROTEIN"/>
    <property type="match status" value="1"/>
</dbReference>
<dbReference type="PANTHER" id="PTHR31293:SF12">
    <property type="entry name" value="RNI-LIKE SUPERFAMILY PROTEIN"/>
    <property type="match status" value="1"/>
</dbReference>
<dbReference type="Pfam" id="PF00646">
    <property type="entry name" value="F-box"/>
    <property type="match status" value="1"/>
</dbReference>
<dbReference type="SMART" id="SM00579">
    <property type="entry name" value="FBD"/>
    <property type="match status" value="1"/>
</dbReference>
<dbReference type="SMART" id="SM00256">
    <property type="entry name" value="FBOX"/>
    <property type="match status" value="1"/>
</dbReference>
<dbReference type="SUPFAM" id="SSF81383">
    <property type="entry name" value="F-box domain"/>
    <property type="match status" value="1"/>
</dbReference>
<dbReference type="SUPFAM" id="SSF52047">
    <property type="entry name" value="RNI-like"/>
    <property type="match status" value="1"/>
</dbReference>
<dbReference type="PROSITE" id="PS50181">
    <property type="entry name" value="FBOX"/>
    <property type="match status" value="1"/>
</dbReference>
<evidence type="ECO:0000255" key="1">
    <source>
        <dbReference type="PROSITE-ProRule" id="PRU00080"/>
    </source>
</evidence>
<evidence type="ECO:0000305" key="2"/>
<reference key="1">
    <citation type="journal article" date="2000" name="Nature">
        <title>Sequence and analysis of chromosome 3 of the plant Arabidopsis thaliana.</title>
        <authorList>
            <person name="Salanoubat M."/>
            <person name="Lemcke K."/>
            <person name="Rieger M."/>
            <person name="Ansorge W."/>
            <person name="Unseld M."/>
            <person name="Fartmann B."/>
            <person name="Valle G."/>
            <person name="Bloecker H."/>
            <person name="Perez-Alonso M."/>
            <person name="Obermaier B."/>
            <person name="Delseny M."/>
            <person name="Boutry M."/>
            <person name="Grivell L.A."/>
            <person name="Mache R."/>
            <person name="Puigdomenech P."/>
            <person name="De Simone V."/>
            <person name="Choisne N."/>
            <person name="Artiguenave F."/>
            <person name="Robert C."/>
            <person name="Brottier P."/>
            <person name="Wincker P."/>
            <person name="Cattolico L."/>
            <person name="Weissenbach J."/>
            <person name="Saurin W."/>
            <person name="Quetier F."/>
            <person name="Schaefer M."/>
            <person name="Mueller-Auer S."/>
            <person name="Gabel C."/>
            <person name="Fuchs M."/>
            <person name="Benes V."/>
            <person name="Wurmbach E."/>
            <person name="Drzonek H."/>
            <person name="Erfle H."/>
            <person name="Jordan N."/>
            <person name="Bangert S."/>
            <person name="Wiedelmann R."/>
            <person name="Kranz H."/>
            <person name="Voss H."/>
            <person name="Holland R."/>
            <person name="Brandt P."/>
            <person name="Nyakatura G."/>
            <person name="Vezzi A."/>
            <person name="D'Angelo M."/>
            <person name="Pallavicini A."/>
            <person name="Toppo S."/>
            <person name="Simionati B."/>
            <person name="Conrad A."/>
            <person name="Hornischer K."/>
            <person name="Kauer G."/>
            <person name="Loehnert T.-H."/>
            <person name="Nordsiek G."/>
            <person name="Reichelt J."/>
            <person name="Scharfe M."/>
            <person name="Schoen O."/>
            <person name="Bargues M."/>
            <person name="Terol J."/>
            <person name="Climent J."/>
            <person name="Navarro P."/>
            <person name="Collado C."/>
            <person name="Perez-Perez A."/>
            <person name="Ottenwaelder B."/>
            <person name="Duchemin D."/>
            <person name="Cooke R."/>
            <person name="Laudie M."/>
            <person name="Berger-Llauro C."/>
            <person name="Purnelle B."/>
            <person name="Masuy D."/>
            <person name="de Haan M."/>
            <person name="Maarse A.C."/>
            <person name="Alcaraz J.-P."/>
            <person name="Cottet A."/>
            <person name="Casacuberta E."/>
            <person name="Monfort A."/>
            <person name="Argiriou A."/>
            <person name="Flores M."/>
            <person name="Liguori R."/>
            <person name="Vitale D."/>
            <person name="Mannhaupt G."/>
            <person name="Haase D."/>
            <person name="Schoof H."/>
            <person name="Rudd S."/>
            <person name="Zaccaria P."/>
            <person name="Mewes H.-W."/>
            <person name="Mayer K.F.X."/>
            <person name="Kaul S."/>
            <person name="Town C.D."/>
            <person name="Koo H.L."/>
            <person name="Tallon L.J."/>
            <person name="Jenkins J."/>
            <person name="Rooney T."/>
            <person name="Rizzo M."/>
            <person name="Walts A."/>
            <person name="Utterback T."/>
            <person name="Fujii C.Y."/>
            <person name="Shea T.P."/>
            <person name="Creasy T.H."/>
            <person name="Haas B."/>
            <person name="Maiti R."/>
            <person name="Wu D."/>
            <person name="Peterson J."/>
            <person name="Van Aken S."/>
            <person name="Pai G."/>
            <person name="Militscher J."/>
            <person name="Sellers P."/>
            <person name="Gill J.E."/>
            <person name="Feldblyum T.V."/>
            <person name="Preuss D."/>
            <person name="Lin X."/>
            <person name="Nierman W.C."/>
            <person name="Salzberg S.L."/>
            <person name="White O."/>
            <person name="Venter J.C."/>
            <person name="Fraser C.M."/>
            <person name="Kaneko T."/>
            <person name="Nakamura Y."/>
            <person name="Sato S."/>
            <person name="Kato T."/>
            <person name="Asamizu E."/>
            <person name="Sasamoto S."/>
            <person name="Kimura T."/>
            <person name="Idesawa K."/>
            <person name="Kawashima K."/>
            <person name="Kishida Y."/>
            <person name="Kiyokawa C."/>
            <person name="Kohara M."/>
            <person name="Matsumoto M."/>
            <person name="Matsuno A."/>
            <person name="Muraki A."/>
            <person name="Nakayama S."/>
            <person name="Nakazaki N."/>
            <person name="Shinpo S."/>
            <person name="Takeuchi C."/>
            <person name="Wada T."/>
            <person name="Watanabe A."/>
            <person name="Yamada M."/>
            <person name="Yasuda M."/>
            <person name="Tabata S."/>
        </authorList>
    </citation>
    <scope>NUCLEOTIDE SEQUENCE [LARGE SCALE GENOMIC DNA]</scope>
    <source>
        <strain>cv. Columbia</strain>
    </source>
</reference>
<reference key="2">
    <citation type="journal article" date="2017" name="Plant J.">
        <title>Araport11: a complete reannotation of the Arabidopsis thaliana reference genome.</title>
        <authorList>
            <person name="Cheng C.Y."/>
            <person name="Krishnakumar V."/>
            <person name="Chan A.P."/>
            <person name="Thibaud-Nissen F."/>
            <person name="Schobel S."/>
            <person name="Town C.D."/>
        </authorList>
    </citation>
    <scope>GENOME REANNOTATION</scope>
    <source>
        <strain>cv. Columbia</strain>
    </source>
</reference>
<reference key="3">
    <citation type="journal article" date="2003" name="Science">
        <title>Empirical analysis of transcriptional activity in the Arabidopsis genome.</title>
        <authorList>
            <person name="Yamada K."/>
            <person name="Lim J."/>
            <person name="Dale J.M."/>
            <person name="Chen H."/>
            <person name="Shinn P."/>
            <person name="Palm C.J."/>
            <person name="Southwick A.M."/>
            <person name="Wu H.C."/>
            <person name="Kim C.J."/>
            <person name="Nguyen M."/>
            <person name="Pham P.K."/>
            <person name="Cheuk R.F."/>
            <person name="Karlin-Newmann G."/>
            <person name="Liu S.X."/>
            <person name="Lam B."/>
            <person name="Sakano H."/>
            <person name="Wu T."/>
            <person name="Yu G."/>
            <person name="Miranda M."/>
            <person name="Quach H.L."/>
            <person name="Tripp M."/>
            <person name="Chang C.H."/>
            <person name="Lee J.M."/>
            <person name="Toriumi M.J."/>
            <person name="Chan M.M."/>
            <person name="Tang C.C."/>
            <person name="Onodera C.S."/>
            <person name="Deng J.M."/>
            <person name="Akiyama K."/>
            <person name="Ansari Y."/>
            <person name="Arakawa T."/>
            <person name="Banh J."/>
            <person name="Banno F."/>
            <person name="Bowser L."/>
            <person name="Brooks S.Y."/>
            <person name="Carninci P."/>
            <person name="Chao Q."/>
            <person name="Choy N."/>
            <person name="Enju A."/>
            <person name="Goldsmith A.D."/>
            <person name="Gurjal M."/>
            <person name="Hansen N.F."/>
            <person name="Hayashizaki Y."/>
            <person name="Johnson-Hopson C."/>
            <person name="Hsuan V.W."/>
            <person name="Iida K."/>
            <person name="Karnes M."/>
            <person name="Khan S."/>
            <person name="Koesema E."/>
            <person name="Ishida J."/>
            <person name="Jiang P.X."/>
            <person name="Jones T."/>
            <person name="Kawai J."/>
            <person name="Kamiya A."/>
            <person name="Meyers C."/>
            <person name="Nakajima M."/>
            <person name="Narusaka M."/>
            <person name="Seki M."/>
            <person name="Sakurai T."/>
            <person name="Satou M."/>
            <person name="Tamse R."/>
            <person name="Vaysberg M."/>
            <person name="Wallender E.K."/>
            <person name="Wong C."/>
            <person name="Yamamura Y."/>
            <person name="Yuan S."/>
            <person name="Shinozaki K."/>
            <person name="Davis R.W."/>
            <person name="Theologis A."/>
            <person name="Ecker J.R."/>
        </authorList>
    </citation>
    <scope>NUCLEOTIDE SEQUENCE [LARGE SCALE MRNA]</scope>
    <source>
        <strain>cv. Columbia</strain>
    </source>
</reference>
<name>FB212_ARATH</name>
<comment type="interaction">
    <interactant intactId="EBI-1235891">
        <id>Q9LX56</id>
    </interactant>
    <interactant intactId="EBI-1235664">
        <id>P25854</id>
        <label>CAM4</label>
    </interactant>
    <organismsDiffer>false</organismsDiffer>
    <experiments>2</experiments>
</comment>
<comment type="sequence caution" evidence="2">
    <conflict type="erroneous gene model prediction">
        <sequence resource="EMBL-CDS" id="CAB86943"/>
    </conflict>
    <text>The predicted gene At3g59150 has been split into 2 genes: At3g59150 and At3g59160.</text>
</comment>
<organism>
    <name type="scientific">Arabidopsis thaliana</name>
    <name type="common">Mouse-ear cress</name>
    <dbReference type="NCBI Taxonomy" id="3702"/>
    <lineage>
        <taxon>Eukaryota</taxon>
        <taxon>Viridiplantae</taxon>
        <taxon>Streptophyta</taxon>
        <taxon>Embryophyta</taxon>
        <taxon>Tracheophyta</taxon>
        <taxon>Spermatophyta</taxon>
        <taxon>Magnoliopsida</taxon>
        <taxon>eudicotyledons</taxon>
        <taxon>Gunneridae</taxon>
        <taxon>Pentapetalae</taxon>
        <taxon>rosids</taxon>
        <taxon>malvids</taxon>
        <taxon>Brassicales</taxon>
        <taxon>Brassicaceae</taxon>
        <taxon>Camelineae</taxon>
        <taxon>Arabidopsis</taxon>
    </lineage>
</organism>
<protein>
    <recommendedName>
        <fullName>F-box protein At3g59150</fullName>
    </recommendedName>
</protein>
<gene>
    <name type="ordered locus">At3g59150</name>
    <name type="ORF">F17J16.200</name>
    <name type="ORF">F25L23.10</name>
</gene>
<proteinExistence type="evidence at protein level"/>
<keyword id="KW-1185">Reference proteome</keyword>
<accession>Q9LX56</accession>
<accession>F4J870</accession>
<accession>Q9LYS1</accession>